<keyword id="KW-0067">ATP-binding</keyword>
<keyword id="KW-0235">DNA replication</keyword>
<keyword id="KW-0547">Nucleotide-binding</keyword>
<reference key="1">
    <citation type="journal article" date="2009" name="Proc. Natl. Acad. Sci. U.S.A.">
        <title>Biogeography of the Sulfolobus islandicus pan-genome.</title>
        <authorList>
            <person name="Reno M.L."/>
            <person name="Held N.L."/>
            <person name="Fields C.J."/>
            <person name="Burke P.V."/>
            <person name="Whitaker R.J."/>
        </authorList>
    </citation>
    <scope>NUCLEOTIDE SEQUENCE [LARGE SCALE GENOMIC DNA]</scope>
    <source>
        <strain>M.16.27</strain>
    </source>
</reference>
<accession>C3N5N1</accession>
<proteinExistence type="inferred from homology"/>
<name>RFCL_SACI3</name>
<dbReference type="EMBL" id="CP001401">
    <property type="protein sequence ID" value="ACP55306.1"/>
    <property type="molecule type" value="Genomic_DNA"/>
</dbReference>
<dbReference type="RefSeq" id="WP_012711372.1">
    <property type="nucleotide sequence ID" value="NC_012632.1"/>
</dbReference>
<dbReference type="SMR" id="C3N5N1"/>
<dbReference type="KEGG" id="sim:M1627_1423"/>
<dbReference type="HOGENOM" id="CLU_027255_1_1_2"/>
<dbReference type="Proteomes" id="UP000002307">
    <property type="component" value="Chromosome"/>
</dbReference>
<dbReference type="GO" id="GO:0005524">
    <property type="term" value="F:ATP binding"/>
    <property type="evidence" value="ECO:0007669"/>
    <property type="project" value="UniProtKB-UniRule"/>
</dbReference>
<dbReference type="GO" id="GO:0016887">
    <property type="term" value="F:ATP hydrolysis activity"/>
    <property type="evidence" value="ECO:0007669"/>
    <property type="project" value="InterPro"/>
</dbReference>
<dbReference type="GO" id="GO:0003689">
    <property type="term" value="F:DNA clamp loader activity"/>
    <property type="evidence" value="ECO:0007669"/>
    <property type="project" value="UniProtKB-UniRule"/>
</dbReference>
<dbReference type="GO" id="GO:0006260">
    <property type="term" value="P:DNA replication"/>
    <property type="evidence" value="ECO:0007669"/>
    <property type="project" value="UniProtKB-UniRule"/>
</dbReference>
<dbReference type="CDD" id="cd00009">
    <property type="entry name" value="AAA"/>
    <property type="match status" value="1"/>
</dbReference>
<dbReference type="CDD" id="cd18140">
    <property type="entry name" value="HLD_clamp_RFC"/>
    <property type="match status" value="1"/>
</dbReference>
<dbReference type="Gene3D" id="1.10.8.60">
    <property type="match status" value="1"/>
</dbReference>
<dbReference type="Gene3D" id="3.40.50.300">
    <property type="entry name" value="P-loop containing nucleotide triphosphate hydrolases"/>
    <property type="match status" value="1"/>
</dbReference>
<dbReference type="HAMAP" id="MF_01508">
    <property type="entry name" value="RfcL"/>
    <property type="match status" value="1"/>
</dbReference>
<dbReference type="InterPro" id="IPR003593">
    <property type="entry name" value="AAA+_ATPase"/>
</dbReference>
<dbReference type="InterPro" id="IPR003959">
    <property type="entry name" value="ATPase_AAA_core"/>
</dbReference>
<dbReference type="InterPro" id="IPR027417">
    <property type="entry name" value="P-loop_NTPase"/>
</dbReference>
<dbReference type="InterPro" id="IPR023935">
    <property type="entry name" value="Rep_factor-C_lsu"/>
</dbReference>
<dbReference type="InterPro" id="IPR047854">
    <property type="entry name" value="RFC_lid"/>
</dbReference>
<dbReference type="NCBIfam" id="NF003226">
    <property type="entry name" value="PRK04195.1-1"/>
    <property type="match status" value="1"/>
</dbReference>
<dbReference type="NCBIfam" id="NF003229">
    <property type="entry name" value="PRK04195.1-5"/>
    <property type="match status" value="1"/>
</dbReference>
<dbReference type="PANTHER" id="PTHR23389">
    <property type="entry name" value="CHROMOSOME TRANSMISSION FIDELITY FACTOR 18"/>
    <property type="match status" value="1"/>
</dbReference>
<dbReference type="PANTHER" id="PTHR23389:SF6">
    <property type="entry name" value="REPLICATION FACTOR C SUBUNIT 1"/>
    <property type="match status" value="1"/>
</dbReference>
<dbReference type="Pfam" id="PF00004">
    <property type="entry name" value="AAA"/>
    <property type="match status" value="1"/>
</dbReference>
<dbReference type="Pfam" id="PF21960">
    <property type="entry name" value="RCF1-5-like_lid"/>
    <property type="match status" value="1"/>
</dbReference>
<dbReference type="SMART" id="SM00382">
    <property type="entry name" value="AAA"/>
    <property type="match status" value="1"/>
</dbReference>
<dbReference type="SUPFAM" id="SSF52540">
    <property type="entry name" value="P-loop containing nucleoside triphosphate hydrolases"/>
    <property type="match status" value="1"/>
</dbReference>
<gene>
    <name evidence="1" type="primary">rfcL</name>
    <name type="ordered locus">M1627_1423</name>
</gene>
<comment type="function">
    <text evidence="1">Part of the RFC clamp loader complex which loads the PCNA sliding clamp onto DNA.</text>
</comment>
<comment type="subunit">
    <text evidence="1">Heteromultimer composed of small subunits (RfcS) and large subunits (RfcL).</text>
</comment>
<comment type="similarity">
    <text evidence="1">Belongs to the activator 1 small subunits family. RfcL subfamily.</text>
</comment>
<protein>
    <recommendedName>
        <fullName evidence="1">Replication factor C large subunit</fullName>
        <shortName evidence="1">RFC large subunit</shortName>
    </recommendedName>
    <alternativeName>
        <fullName evidence="1">Clamp loader large subunit</fullName>
    </alternativeName>
</protein>
<organism>
    <name type="scientific">Saccharolobus islandicus (strain M.16.27)</name>
    <name type="common">Sulfolobus islandicus</name>
    <dbReference type="NCBI Taxonomy" id="427318"/>
    <lineage>
        <taxon>Archaea</taxon>
        <taxon>Thermoproteota</taxon>
        <taxon>Thermoprotei</taxon>
        <taxon>Sulfolobales</taxon>
        <taxon>Sulfolobaceae</taxon>
        <taxon>Saccharolobus</taxon>
    </lineage>
</organism>
<sequence length="405" mass="46657">MIQWFLKYRPRSLKDVENQDGAKKELQEWIESWLNGKPNAKAVLLHGPPGVGKTTLAEALAHDYNLELLEMNASDSRKLQDIKSVAEKASVYGSIFGTRGKLILLDEVDGINVREDTGAIQGILELIEKTKYPLIMTANDPWNPALRELRNKTKMVGLNKLGKYPLRRLLKKICQAEKIICDDEALNYIIDTSEGDARYAINMLQGIGEGYGKVTLDLVEAMARRKERELDPFETLRDIFWARYAWQAKNAATSAQIDYDMLIRWISENIPIQYDNIEDVWRAFDALSRASIFLKRAKGGDWDLLSYAYDLMSSGVAAAEIEKKKPNWKPKWKKYQFPSYIQLLSKSKDIRDTRDEIIKKLAIHSSFNKTLNDTYPFFLIFYKKYDKRLSLNTKEKEYLNSASKS</sequence>
<evidence type="ECO:0000255" key="1">
    <source>
        <dbReference type="HAMAP-Rule" id="MF_01508"/>
    </source>
</evidence>
<feature type="chain" id="PRO_1000215339" description="Replication factor C large subunit">
    <location>
        <begin position="1"/>
        <end position="405"/>
    </location>
</feature>
<feature type="binding site" evidence="1">
    <location>
        <begin position="47"/>
        <end position="54"/>
    </location>
    <ligand>
        <name>ATP</name>
        <dbReference type="ChEBI" id="CHEBI:30616"/>
    </ligand>
</feature>